<proteinExistence type="inferred from homology"/>
<accession>Q1GRH1</accession>
<name>RL27_SPHAL</name>
<gene>
    <name evidence="1" type="primary">rpmA</name>
    <name type="ordered locus">Sala_2042</name>
</gene>
<sequence>MAHKKAGGSSRNGRDSAGRRLGVKKFGGQDVIGGNIIVRQRGTKVYPGVNVGMGKDHTLFATADGRVRFHDGKLGRKYVSVDMMAEAAE</sequence>
<reference key="1">
    <citation type="journal article" date="2009" name="Proc. Natl. Acad. Sci. U.S.A.">
        <title>The genomic basis of trophic strategy in marine bacteria.</title>
        <authorList>
            <person name="Lauro F.M."/>
            <person name="McDougald D."/>
            <person name="Thomas T."/>
            <person name="Williams T.J."/>
            <person name="Egan S."/>
            <person name="Rice S."/>
            <person name="DeMaere M.Z."/>
            <person name="Ting L."/>
            <person name="Ertan H."/>
            <person name="Johnson J."/>
            <person name="Ferriera S."/>
            <person name="Lapidus A."/>
            <person name="Anderson I."/>
            <person name="Kyrpides N."/>
            <person name="Munk A.C."/>
            <person name="Detter C."/>
            <person name="Han C.S."/>
            <person name="Brown M.V."/>
            <person name="Robb F.T."/>
            <person name="Kjelleberg S."/>
            <person name="Cavicchioli R."/>
        </authorList>
    </citation>
    <scope>NUCLEOTIDE SEQUENCE [LARGE SCALE GENOMIC DNA]</scope>
    <source>
        <strain>DSM 13593 / LMG 18877 / RB2256</strain>
    </source>
</reference>
<comment type="similarity">
    <text evidence="1">Belongs to the bacterial ribosomal protein bL27 family.</text>
</comment>
<keyword id="KW-1185">Reference proteome</keyword>
<keyword id="KW-0687">Ribonucleoprotein</keyword>
<keyword id="KW-0689">Ribosomal protein</keyword>
<organism>
    <name type="scientific">Sphingopyxis alaskensis (strain DSM 13593 / LMG 18877 / RB2256)</name>
    <name type="common">Sphingomonas alaskensis</name>
    <dbReference type="NCBI Taxonomy" id="317655"/>
    <lineage>
        <taxon>Bacteria</taxon>
        <taxon>Pseudomonadati</taxon>
        <taxon>Pseudomonadota</taxon>
        <taxon>Alphaproteobacteria</taxon>
        <taxon>Sphingomonadales</taxon>
        <taxon>Sphingomonadaceae</taxon>
        <taxon>Sphingopyxis</taxon>
    </lineage>
</organism>
<feature type="chain" id="PRO_1000017615" description="Large ribosomal subunit protein bL27">
    <location>
        <begin position="1"/>
        <end position="89"/>
    </location>
</feature>
<feature type="region of interest" description="Disordered" evidence="2">
    <location>
        <begin position="1"/>
        <end position="22"/>
    </location>
</feature>
<dbReference type="EMBL" id="CP000356">
    <property type="protein sequence ID" value="ABF53751.1"/>
    <property type="molecule type" value="Genomic_DNA"/>
</dbReference>
<dbReference type="RefSeq" id="WP_011542327.1">
    <property type="nucleotide sequence ID" value="NC_008048.1"/>
</dbReference>
<dbReference type="SMR" id="Q1GRH1"/>
<dbReference type="STRING" id="317655.Sala_2042"/>
<dbReference type="KEGG" id="sal:Sala_2042"/>
<dbReference type="eggNOG" id="COG0211">
    <property type="taxonomic scope" value="Bacteria"/>
</dbReference>
<dbReference type="HOGENOM" id="CLU_095424_4_1_5"/>
<dbReference type="OrthoDB" id="9803474at2"/>
<dbReference type="Proteomes" id="UP000006578">
    <property type="component" value="Chromosome"/>
</dbReference>
<dbReference type="GO" id="GO:0022625">
    <property type="term" value="C:cytosolic large ribosomal subunit"/>
    <property type="evidence" value="ECO:0007669"/>
    <property type="project" value="TreeGrafter"/>
</dbReference>
<dbReference type="GO" id="GO:0003735">
    <property type="term" value="F:structural constituent of ribosome"/>
    <property type="evidence" value="ECO:0007669"/>
    <property type="project" value="InterPro"/>
</dbReference>
<dbReference type="GO" id="GO:0006412">
    <property type="term" value="P:translation"/>
    <property type="evidence" value="ECO:0007669"/>
    <property type="project" value="UniProtKB-UniRule"/>
</dbReference>
<dbReference type="FunFam" id="2.40.50.100:FF:000020">
    <property type="entry name" value="50S ribosomal protein L27"/>
    <property type="match status" value="1"/>
</dbReference>
<dbReference type="Gene3D" id="2.40.50.100">
    <property type="match status" value="1"/>
</dbReference>
<dbReference type="HAMAP" id="MF_00539">
    <property type="entry name" value="Ribosomal_bL27"/>
    <property type="match status" value="1"/>
</dbReference>
<dbReference type="InterPro" id="IPR001684">
    <property type="entry name" value="Ribosomal_bL27"/>
</dbReference>
<dbReference type="InterPro" id="IPR018261">
    <property type="entry name" value="Ribosomal_bL27_CS"/>
</dbReference>
<dbReference type="NCBIfam" id="TIGR00062">
    <property type="entry name" value="L27"/>
    <property type="match status" value="1"/>
</dbReference>
<dbReference type="PANTHER" id="PTHR15893:SF0">
    <property type="entry name" value="LARGE RIBOSOMAL SUBUNIT PROTEIN BL27M"/>
    <property type="match status" value="1"/>
</dbReference>
<dbReference type="PANTHER" id="PTHR15893">
    <property type="entry name" value="RIBOSOMAL PROTEIN L27"/>
    <property type="match status" value="1"/>
</dbReference>
<dbReference type="Pfam" id="PF01016">
    <property type="entry name" value="Ribosomal_L27"/>
    <property type="match status" value="1"/>
</dbReference>
<dbReference type="PRINTS" id="PR00063">
    <property type="entry name" value="RIBOSOMALL27"/>
</dbReference>
<dbReference type="SUPFAM" id="SSF110324">
    <property type="entry name" value="Ribosomal L27 protein-like"/>
    <property type="match status" value="1"/>
</dbReference>
<dbReference type="PROSITE" id="PS00831">
    <property type="entry name" value="RIBOSOMAL_L27"/>
    <property type="match status" value="1"/>
</dbReference>
<evidence type="ECO:0000255" key="1">
    <source>
        <dbReference type="HAMAP-Rule" id="MF_00539"/>
    </source>
</evidence>
<evidence type="ECO:0000256" key="2">
    <source>
        <dbReference type="SAM" id="MobiDB-lite"/>
    </source>
</evidence>
<evidence type="ECO:0000305" key="3"/>
<protein>
    <recommendedName>
        <fullName evidence="1">Large ribosomal subunit protein bL27</fullName>
    </recommendedName>
    <alternativeName>
        <fullName evidence="3">50S ribosomal protein L27</fullName>
    </alternativeName>
</protein>